<protein>
    <recommendedName>
        <fullName evidence="1">D-amino acid dehydrogenase</fullName>
        <ecNumber evidence="1">1.4.99.-</ecNumber>
    </recommendedName>
</protein>
<name>DADA_PHOLL</name>
<comment type="function">
    <text evidence="1">Oxidative deamination of D-amino acids.</text>
</comment>
<comment type="catalytic activity">
    <reaction evidence="1">
        <text>a D-alpha-amino acid + A + H2O = a 2-oxocarboxylate + AH2 + NH4(+)</text>
        <dbReference type="Rhea" id="RHEA:18125"/>
        <dbReference type="ChEBI" id="CHEBI:13193"/>
        <dbReference type="ChEBI" id="CHEBI:15377"/>
        <dbReference type="ChEBI" id="CHEBI:17499"/>
        <dbReference type="ChEBI" id="CHEBI:28938"/>
        <dbReference type="ChEBI" id="CHEBI:35179"/>
        <dbReference type="ChEBI" id="CHEBI:59871"/>
    </reaction>
</comment>
<comment type="cofactor">
    <cofactor evidence="1">
        <name>FAD</name>
        <dbReference type="ChEBI" id="CHEBI:57692"/>
    </cofactor>
</comment>
<comment type="pathway">
    <text>Amino-acid degradation; D-alanine degradation; NH(3) and pyruvate from D-alanine: step 1/1.</text>
</comment>
<comment type="similarity">
    <text evidence="1">Belongs to the DadA oxidoreductase family.</text>
</comment>
<comment type="sequence caution" evidence="2">
    <conflict type="erroneous initiation">
        <sequence resource="EMBL-CDS" id="CAE14935"/>
    </conflict>
</comment>
<reference key="1">
    <citation type="journal article" date="2003" name="Nat. Biotechnol.">
        <title>The genome sequence of the entomopathogenic bacterium Photorhabdus luminescens.</title>
        <authorList>
            <person name="Duchaud E."/>
            <person name="Rusniok C."/>
            <person name="Frangeul L."/>
            <person name="Buchrieser C."/>
            <person name="Givaudan A."/>
            <person name="Taourit S."/>
            <person name="Bocs S."/>
            <person name="Boursaux-Eude C."/>
            <person name="Chandler M."/>
            <person name="Charles J.-F."/>
            <person name="Dassa E."/>
            <person name="Derose R."/>
            <person name="Derzelle S."/>
            <person name="Freyssinet G."/>
            <person name="Gaudriault S."/>
            <person name="Medigue C."/>
            <person name="Lanois A."/>
            <person name="Powell K."/>
            <person name="Siguier P."/>
            <person name="Vincent R."/>
            <person name="Wingate V."/>
            <person name="Zouine M."/>
            <person name="Glaser P."/>
            <person name="Boemare N."/>
            <person name="Danchin A."/>
            <person name="Kunst F."/>
        </authorList>
    </citation>
    <scope>NUCLEOTIDE SEQUENCE [LARGE SCALE GENOMIC DNA]</scope>
    <source>
        <strain>DSM 15139 / CIP 105565 / TT01</strain>
    </source>
</reference>
<sequence>MKILILGSGVIGVTSAWYLVQQGHEVTVIDRQGSAAEETSAANAGQISPGYATPWGAPGIPLKAIKWMFQRHAPLAIRPDGSLFQLRWMWQMLRNCDASHYAINKSRMVRLAEYSRDCIKQLRADTGIQYEGRQRGTLQLFRTNKQFDNAVNDIAVLEQEGVPYNLLTADKLATVEPALAHAAHKLTGGLQLPNDETGDCQLFTKELVKMAEAAGVTFLFNKQVKQLLVEGHRIIGVQCEDGVMTADNYVVAMGAYSTELLKGLVKIPVYPLKGYSLTMPIVDAERAPVSTALDETYKIAITRFDNRIRVGGMAEVVGFNLNLLKARHETLKMVVQDLYPGGGDITQTHFWTGLRPMTPDGTPIVGPTEYHNLYLNTGHGTLGWTMACGSSQLLADIISGKKPAIASDDLSVFRYVNGFNTKLVPFSHQLHTELRG</sequence>
<keyword id="KW-0274">FAD</keyword>
<keyword id="KW-0285">Flavoprotein</keyword>
<keyword id="KW-0560">Oxidoreductase</keyword>
<keyword id="KW-1185">Reference proteome</keyword>
<feature type="chain" id="PRO_0000166137" description="D-amino acid dehydrogenase">
    <location>
        <begin position="1"/>
        <end position="436"/>
    </location>
</feature>
<feature type="binding site" evidence="1">
    <location>
        <begin position="3"/>
        <end position="17"/>
    </location>
    <ligand>
        <name>FAD</name>
        <dbReference type="ChEBI" id="CHEBI:57692"/>
    </ligand>
</feature>
<proteinExistence type="inferred from homology"/>
<gene>
    <name evidence="1" type="primary">dadA</name>
    <name type="ordered locus">plu2561</name>
</gene>
<dbReference type="EC" id="1.4.99.-" evidence="1"/>
<dbReference type="EMBL" id="BX571867">
    <property type="protein sequence ID" value="CAE14935.1"/>
    <property type="status" value="ALT_INIT"/>
    <property type="molecule type" value="Genomic_DNA"/>
</dbReference>
<dbReference type="RefSeq" id="WP_041380099.1">
    <property type="nucleotide sequence ID" value="NC_005126.1"/>
</dbReference>
<dbReference type="SMR" id="Q7N3Z6"/>
<dbReference type="STRING" id="243265.plu2561"/>
<dbReference type="GeneID" id="48848822"/>
<dbReference type="KEGG" id="plu:plu2561"/>
<dbReference type="eggNOG" id="COG0665">
    <property type="taxonomic scope" value="Bacteria"/>
</dbReference>
<dbReference type="HOGENOM" id="CLU_007884_9_2_6"/>
<dbReference type="OrthoDB" id="9805337at2"/>
<dbReference type="UniPathway" id="UPA00043">
    <property type="reaction ID" value="UER00498"/>
</dbReference>
<dbReference type="Proteomes" id="UP000002514">
    <property type="component" value="Chromosome"/>
</dbReference>
<dbReference type="GO" id="GO:0005737">
    <property type="term" value="C:cytoplasm"/>
    <property type="evidence" value="ECO:0007669"/>
    <property type="project" value="TreeGrafter"/>
</dbReference>
<dbReference type="GO" id="GO:0005886">
    <property type="term" value="C:plasma membrane"/>
    <property type="evidence" value="ECO:0007669"/>
    <property type="project" value="TreeGrafter"/>
</dbReference>
<dbReference type="GO" id="GO:0008718">
    <property type="term" value="F:D-amino-acid dehydrogenase activity"/>
    <property type="evidence" value="ECO:0007669"/>
    <property type="project" value="UniProtKB-UniRule"/>
</dbReference>
<dbReference type="GO" id="GO:0055130">
    <property type="term" value="P:D-alanine catabolic process"/>
    <property type="evidence" value="ECO:0007669"/>
    <property type="project" value="UniProtKB-UniPathway"/>
</dbReference>
<dbReference type="FunFam" id="3.50.50.60:FF:000020">
    <property type="entry name" value="D-amino acid dehydrogenase"/>
    <property type="match status" value="1"/>
</dbReference>
<dbReference type="Gene3D" id="3.30.9.10">
    <property type="entry name" value="D-Amino Acid Oxidase, subunit A, domain 2"/>
    <property type="match status" value="1"/>
</dbReference>
<dbReference type="Gene3D" id="3.50.50.60">
    <property type="entry name" value="FAD/NAD(P)-binding domain"/>
    <property type="match status" value="2"/>
</dbReference>
<dbReference type="HAMAP" id="MF_01202">
    <property type="entry name" value="DadA"/>
    <property type="match status" value="1"/>
</dbReference>
<dbReference type="InterPro" id="IPR023080">
    <property type="entry name" value="DadA"/>
</dbReference>
<dbReference type="InterPro" id="IPR006076">
    <property type="entry name" value="FAD-dep_OxRdtase"/>
</dbReference>
<dbReference type="InterPro" id="IPR036188">
    <property type="entry name" value="FAD/NAD-bd_sf"/>
</dbReference>
<dbReference type="NCBIfam" id="NF001933">
    <property type="entry name" value="PRK00711.1"/>
    <property type="match status" value="1"/>
</dbReference>
<dbReference type="PANTHER" id="PTHR13847:SF280">
    <property type="entry name" value="D-AMINO ACID DEHYDROGENASE"/>
    <property type="match status" value="1"/>
</dbReference>
<dbReference type="PANTHER" id="PTHR13847">
    <property type="entry name" value="SARCOSINE DEHYDROGENASE-RELATED"/>
    <property type="match status" value="1"/>
</dbReference>
<dbReference type="Pfam" id="PF01266">
    <property type="entry name" value="DAO"/>
    <property type="match status" value="1"/>
</dbReference>
<dbReference type="SUPFAM" id="SSF54373">
    <property type="entry name" value="FAD-linked reductases, C-terminal domain"/>
    <property type="match status" value="1"/>
</dbReference>
<dbReference type="SUPFAM" id="SSF51905">
    <property type="entry name" value="FAD/NAD(P)-binding domain"/>
    <property type="match status" value="1"/>
</dbReference>
<accession>Q7N3Z6</accession>
<evidence type="ECO:0000255" key="1">
    <source>
        <dbReference type="HAMAP-Rule" id="MF_01202"/>
    </source>
</evidence>
<evidence type="ECO:0000305" key="2"/>
<organism>
    <name type="scientific">Photorhabdus laumondii subsp. laumondii (strain DSM 15139 / CIP 105565 / TT01)</name>
    <name type="common">Photorhabdus luminescens subsp. laumondii</name>
    <dbReference type="NCBI Taxonomy" id="243265"/>
    <lineage>
        <taxon>Bacteria</taxon>
        <taxon>Pseudomonadati</taxon>
        <taxon>Pseudomonadota</taxon>
        <taxon>Gammaproteobacteria</taxon>
        <taxon>Enterobacterales</taxon>
        <taxon>Morganellaceae</taxon>
        <taxon>Photorhabdus</taxon>
    </lineage>
</organism>